<accession>Q9P7H5</accession>
<feature type="chain" id="PRO_0000337250" description="Small ribosomal subunit protein mS38">
    <location>
        <begin position="1"/>
        <end position="175"/>
    </location>
</feature>
<protein>
    <recommendedName>
        <fullName evidence="3">Small ribosomal subunit protein mS38</fullName>
    </recommendedName>
    <alternativeName>
        <fullName>Mitochondrial mRNA-processing protein cox24</fullName>
    </alternativeName>
</protein>
<comment type="function">
    <text evidence="1">Component of the mitochondrial ribosome (mitoribosome), a dedicated translation machinery responsible for the synthesis of mitochondrial genome-encoded proteins, including at least some of the essential transmembrane subunits of the mitochondrial respiratory chain. The mitoribosomes are attached to the mitochondrial inner membrane and translation products are cotranslationally integrated into the membrane. mS38 is also involved in the splicing of the COX1 mRNA.</text>
</comment>
<comment type="subunit">
    <text evidence="1">Component of the mitochondrial small ribosomal subunit (mt-SSU). Mature yeast 74S mitochondrial ribosomes consist of a small (37S) and a large (54S) subunit. The 37S small subunit contains a 15S ribosomal RNA (15S mt-rRNA) and at least 32 different proteins. The 54S large subunit contains a 21S rRNA (21S mt-rRNA) and at least 45 different proteins.</text>
</comment>
<comment type="subcellular location">
    <subcellularLocation>
        <location evidence="2">Mitochondrion</location>
    </subcellularLocation>
    <subcellularLocation>
        <location evidence="1">Mitochondrion inner membrane</location>
        <topology evidence="1">Peripheral membrane protein</topology>
        <orientation evidence="1">Matrix side</orientation>
    </subcellularLocation>
</comment>
<comment type="similarity">
    <text evidence="3">Belongs to the mitochondrion-specific ribosomal protein mS38 family.</text>
</comment>
<evidence type="ECO:0000250" key="1">
    <source>
        <dbReference type="UniProtKB" id="P32344"/>
    </source>
</evidence>
<evidence type="ECO:0000269" key="2">
    <source>
    </source>
</evidence>
<evidence type="ECO:0000305" key="3"/>
<sequence length="175" mass="19828">MLRRGALSTILKGLNGLSLRSPIPIWHVSASPEVGSKYNLPTVPTTSHVSYRQIAKANFFAGYRPLSANQICVPKVESKTQVSQSQDEEDQPQEYVLSLEDGYLYAQSFSASGSVTQTQPARISTQVWEQICDKLISITPLDLTSVKRKRKLKMNKHKFKKRLRRQRALRKRLGK</sequence>
<name>COX24_SCHPO</name>
<proteinExistence type="inferred from homology"/>
<reference key="1">
    <citation type="journal article" date="2002" name="Nature">
        <title>The genome sequence of Schizosaccharomyces pombe.</title>
        <authorList>
            <person name="Wood V."/>
            <person name="Gwilliam R."/>
            <person name="Rajandream M.A."/>
            <person name="Lyne M.H."/>
            <person name="Lyne R."/>
            <person name="Stewart A."/>
            <person name="Sgouros J.G."/>
            <person name="Peat N."/>
            <person name="Hayles J."/>
            <person name="Baker S.G."/>
            <person name="Basham D."/>
            <person name="Bowman S."/>
            <person name="Brooks K."/>
            <person name="Brown D."/>
            <person name="Brown S."/>
            <person name="Chillingworth T."/>
            <person name="Churcher C.M."/>
            <person name="Collins M."/>
            <person name="Connor R."/>
            <person name="Cronin A."/>
            <person name="Davis P."/>
            <person name="Feltwell T."/>
            <person name="Fraser A."/>
            <person name="Gentles S."/>
            <person name="Goble A."/>
            <person name="Hamlin N."/>
            <person name="Harris D.E."/>
            <person name="Hidalgo J."/>
            <person name="Hodgson G."/>
            <person name="Holroyd S."/>
            <person name="Hornsby T."/>
            <person name="Howarth S."/>
            <person name="Huckle E.J."/>
            <person name="Hunt S."/>
            <person name="Jagels K."/>
            <person name="James K.D."/>
            <person name="Jones L."/>
            <person name="Jones M."/>
            <person name="Leather S."/>
            <person name="McDonald S."/>
            <person name="McLean J."/>
            <person name="Mooney P."/>
            <person name="Moule S."/>
            <person name="Mungall K.L."/>
            <person name="Murphy L.D."/>
            <person name="Niblett D."/>
            <person name="Odell C."/>
            <person name="Oliver K."/>
            <person name="O'Neil S."/>
            <person name="Pearson D."/>
            <person name="Quail M.A."/>
            <person name="Rabbinowitsch E."/>
            <person name="Rutherford K.M."/>
            <person name="Rutter S."/>
            <person name="Saunders D."/>
            <person name="Seeger K."/>
            <person name="Sharp S."/>
            <person name="Skelton J."/>
            <person name="Simmonds M.N."/>
            <person name="Squares R."/>
            <person name="Squares S."/>
            <person name="Stevens K."/>
            <person name="Taylor K."/>
            <person name="Taylor R.G."/>
            <person name="Tivey A."/>
            <person name="Walsh S.V."/>
            <person name="Warren T."/>
            <person name="Whitehead S."/>
            <person name="Woodward J.R."/>
            <person name="Volckaert G."/>
            <person name="Aert R."/>
            <person name="Robben J."/>
            <person name="Grymonprez B."/>
            <person name="Weltjens I."/>
            <person name="Vanstreels E."/>
            <person name="Rieger M."/>
            <person name="Schaefer M."/>
            <person name="Mueller-Auer S."/>
            <person name="Gabel C."/>
            <person name="Fuchs M."/>
            <person name="Duesterhoeft A."/>
            <person name="Fritzc C."/>
            <person name="Holzer E."/>
            <person name="Moestl D."/>
            <person name="Hilbert H."/>
            <person name="Borzym K."/>
            <person name="Langer I."/>
            <person name="Beck A."/>
            <person name="Lehrach H."/>
            <person name="Reinhardt R."/>
            <person name="Pohl T.M."/>
            <person name="Eger P."/>
            <person name="Zimmermann W."/>
            <person name="Wedler H."/>
            <person name="Wambutt R."/>
            <person name="Purnelle B."/>
            <person name="Goffeau A."/>
            <person name="Cadieu E."/>
            <person name="Dreano S."/>
            <person name="Gloux S."/>
            <person name="Lelaure V."/>
            <person name="Mottier S."/>
            <person name="Galibert F."/>
            <person name="Aves S.J."/>
            <person name="Xiang Z."/>
            <person name="Hunt C."/>
            <person name="Moore K."/>
            <person name="Hurst S.M."/>
            <person name="Lucas M."/>
            <person name="Rochet M."/>
            <person name="Gaillardin C."/>
            <person name="Tallada V.A."/>
            <person name="Garzon A."/>
            <person name="Thode G."/>
            <person name="Daga R.R."/>
            <person name="Cruzado L."/>
            <person name="Jimenez J."/>
            <person name="Sanchez M."/>
            <person name="del Rey F."/>
            <person name="Benito J."/>
            <person name="Dominguez A."/>
            <person name="Revuelta J.L."/>
            <person name="Moreno S."/>
            <person name="Armstrong J."/>
            <person name="Forsburg S.L."/>
            <person name="Cerutti L."/>
            <person name="Lowe T."/>
            <person name="McCombie W.R."/>
            <person name="Paulsen I."/>
            <person name="Potashkin J."/>
            <person name="Shpakovski G.V."/>
            <person name="Ussery D."/>
            <person name="Barrell B.G."/>
            <person name="Nurse P."/>
        </authorList>
    </citation>
    <scope>NUCLEOTIDE SEQUENCE [LARGE SCALE GENOMIC DNA]</scope>
    <source>
        <strain>972 / ATCC 24843</strain>
    </source>
</reference>
<reference key="2">
    <citation type="journal article" date="2006" name="Nat. Biotechnol.">
        <title>ORFeome cloning and global analysis of protein localization in the fission yeast Schizosaccharomyces pombe.</title>
        <authorList>
            <person name="Matsuyama A."/>
            <person name="Arai R."/>
            <person name="Yashiroda Y."/>
            <person name="Shirai A."/>
            <person name="Kamata A."/>
            <person name="Sekido S."/>
            <person name="Kobayashi Y."/>
            <person name="Hashimoto A."/>
            <person name="Hamamoto M."/>
            <person name="Hiraoka Y."/>
            <person name="Horinouchi S."/>
            <person name="Yoshida M."/>
        </authorList>
    </citation>
    <scope>SUBCELLULAR LOCATION [LARGE SCALE ANALYSIS]</scope>
</reference>
<dbReference type="EMBL" id="CU329670">
    <property type="protein sequence ID" value="CAB76266.1"/>
    <property type="molecule type" value="Genomic_DNA"/>
</dbReference>
<dbReference type="PIR" id="T50094">
    <property type="entry name" value="T50094"/>
</dbReference>
<dbReference type="RefSeq" id="NP_594711.1">
    <property type="nucleotide sequence ID" value="NM_001020138.2"/>
</dbReference>
<dbReference type="SMR" id="Q9P7H5"/>
<dbReference type="BioGRID" id="278815">
    <property type="interactions" value="1"/>
</dbReference>
<dbReference type="FunCoup" id="Q9P7H5">
    <property type="interactions" value="196"/>
</dbReference>
<dbReference type="STRING" id="284812.Q9P7H5"/>
<dbReference type="PaxDb" id="4896-SPAC1782.04.1"/>
<dbReference type="EnsemblFungi" id="SPAC1782.04.1">
    <property type="protein sequence ID" value="SPAC1782.04.1:pep"/>
    <property type="gene ID" value="SPAC1782.04"/>
</dbReference>
<dbReference type="GeneID" id="2542350"/>
<dbReference type="KEGG" id="spo:2542350"/>
<dbReference type="PomBase" id="SPAC1782.04">
    <property type="gene designation" value="cox24"/>
</dbReference>
<dbReference type="VEuPathDB" id="FungiDB:SPAC1782.04"/>
<dbReference type="eggNOG" id="ENOG502SE4R">
    <property type="taxonomic scope" value="Eukaryota"/>
</dbReference>
<dbReference type="HOGENOM" id="CLU_1678952_0_0_1"/>
<dbReference type="InParanoid" id="Q9P7H5"/>
<dbReference type="OMA" id="IPIWHVS"/>
<dbReference type="PRO" id="PR:Q9P7H5"/>
<dbReference type="Proteomes" id="UP000002485">
    <property type="component" value="Chromosome I"/>
</dbReference>
<dbReference type="GO" id="GO:0099617">
    <property type="term" value="C:matrix side of mitochondrial inner membrane"/>
    <property type="evidence" value="ECO:0000305"/>
    <property type="project" value="PomBase"/>
</dbReference>
<dbReference type="GO" id="GO:0005739">
    <property type="term" value="C:mitochondrion"/>
    <property type="evidence" value="ECO:0007005"/>
    <property type="project" value="PomBase"/>
</dbReference>
<dbReference type="GO" id="GO:1990904">
    <property type="term" value="C:ribonucleoprotein complex"/>
    <property type="evidence" value="ECO:0007669"/>
    <property type="project" value="UniProtKB-KW"/>
</dbReference>
<dbReference type="GO" id="GO:0005840">
    <property type="term" value="C:ribosome"/>
    <property type="evidence" value="ECO:0007669"/>
    <property type="project" value="UniProtKB-KW"/>
</dbReference>
<dbReference type="GO" id="GO:0090615">
    <property type="term" value="P:mitochondrial mRNA processing"/>
    <property type="evidence" value="ECO:0000266"/>
    <property type="project" value="PomBase"/>
</dbReference>
<dbReference type="GO" id="GO:0045862">
    <property type="term" value="P:positive regulation of proteolysis"/>
    <property type="evidence" value="ECO:0000318"/>
    <property type="project" value="GO_Central"/>
</dbReference>
<dbReference type="CDD" id="cd23699">
    <property type="entry name" value="At5g63150_CTD"/>
    <property type="match status" value="1"/>
</dbReference>
<dbReference type="InterPro" id="IPR014804">
    <property type="entry name" value="Pet20-like"/>
</dbReference>
<dbReference type="InterPro" id="IPR013177">
    <property type="entry name" value="Ribosomal_mS38_C"/>
</dbReference>
<dbReference type="PANTHER" id="PTHR32035">
    <property type="entry name" value="AURORA KINASE A-INTERACTING PROTEIN"/>
    <property type="match status" value="1"/>
</dbReference>
<dbReference type="PANTHER" id="PTHR32035:SF3">
    <property type="entry name" value="SMALL RIBOSOMAL SUBUNIT PROTEIN MS38"/>
    <property type="match status" value="1"/>
</dbReference>
<dbReference type="Pfam" id="PF08213">
    <property type="entry name" value="COX24_C"/>
    <property type="match status" value="1"/>
</dbReference>
<dbReference type="Pfam" id="PF08692">
    <property type="entry name" value="Pet20"/>
    <property type="match status" value="1"/>
</dbReference>
<dbReference type="SMART" id="SM01155">
    <property type="entry name" value="DUF1713"/>
    <property type="match status" value="1"/>
</dbReference>
<gene>
    <name type="primary">cox24</name>
    <name type="ORF">SPAC1782.04</name>
</gene>
<organism>
    <name type="scientific">Schizosaccharomyces pombe (strain 972 / ATCC 24843)</name>
    <name type="common">Fission yeast</name>
    <dbReference type="NCBI Taxonomy" id="284812"/>
    <lineage>
        <taxon>Eukaryota</taxon>
        <taxon>Fungi</taxon>
        <taxon>Dikarya</taxon>
        <taxon>Ascomycota</taxon>
        <taxon>Taphrinomycotina</taxon>
        <taxon>Schizosaccharomycetes</taxon>
        <taxon>Schizosaccharomycetales</taxon>
        <taxon>Schizosaccharomycetaceae</taxon>
        <taxon>Schizosaccharomyces</taxon>
    </lineage>
</organism>
<keyword id="KW-0472">Membrane</keyword>
<keyword id="KW-0496">Mitochondrion</keyword>
<keyword id="KW-0999">Mitochondrion inner membrane</keyword>
<keyword id="KW-0507">mRNA processing</keyword>
<keyword id="KW-1185">Reference proteome</keyword>
<keyword id="KW-0687">Ribonucleoprotein</keyword>
<keyword id="KW-0689">Ribosomal protein</keyword>